<keyword id="KW-0488">Methylation</keyword>
<keyword id="KW-1185">Reference proteome</keyword>
<keyword id="KW-0687">Ribonucleoprotein</keyword>
<keyword id="KW-0689">Ribosomal protein</keyword>
<keyword id="KW-0694">RNA-binding</keyword>
<keyword id="KW-0699">rRNA-binding</keyword>
<keyword id="KW-0820">tRNA-binding</keyword>
<organism>
    <name type="scientific">Pelodictyon phaeoclathratiforme (strain DSM 5477 / BU-1)</name>
    <dbReference type="NCBI Taxonomy" id="324925"/>
    <lineage>
        <taxon>Bacteria</taxon>
        <taxon>Pseudomonadati</taxon>
        <taxon>Chlorobiota</taxon>
        <taxon>Chlorobiia</taxon>
        <taxon>Chlorobiales</taxon>
        <taxon>Chlorobiaceae</taxon>
        <taxon>Chlorobium/Pelodictyon group</taxon>
        <taxon>Pelodictyon</taxon>
    </lineage>
</organism>
<name>RS12_PELPB</name>
<feature type="chain" id="PRO_1000194203" description="Small ribosomal subunit protein uS12">
    <location>
        <begin position="1"/>
        <end position="136"/>
    </location>
</feature>
<feature type="region of interest" description="Disordered" evidence="3">
    <location>
        <begin position="101"/>
        <end position="136"/>
    </location>
</feature>
<feature type="modified residue" description="3-methylthioaspartic acid" evidence="1">
    <location>
        <position position="89"/>
    </location>
</feature>
<sequence length="136" mass="14832">MPTIQQLIRLGRSVKASKTASPALEKCPQKRGVCTRVYTTTPKKPNSALRKVARVRLSNKIEVTAYIPGEGHNLQEHSIVLIRGGRVKDLPGVRYHIVRGSLDTSGVADRKQSRSKYGAKQPKAGVPAPVKGKGKR</sequence>
<evidence type="ECO:0000250" key="1"/>
<evidence type="ECO:0000255" key="2">
    <source>
        <dbReference type="HAMAP-Rule" id="MF_00403"/>
    </source>
</evidence>
<evidence type="ECO:0000256" key="3">
    <source>
        <dbReference type="SAM" id="MobiDB-lite"/>
    </source>
</evidence>
<evidence type="ECO:0000305" key="4"/>
<protein>
    <recommendedName>
        <fullName evidence="2">Small ribosomal subunit protein uS12</fullName>
    </recommendedName>
    <alternativeName>
        <fullName evidence="4">30S ribosomal protein S12</fullName>
    </alternativeName>
</protein>
<dbReference type="EMBL" id="CP001110">
    <property type="protein sequence ID" value="ACF42617.1"/>
    <property type="molecule type" value="Genomic_DNA"/>
</dbReference>
<dbReference type="RefSeq" id="WP_012507113.1">
    <property type="nucleotide sequence ID" value="NC_011060.1"/>
</dbReference>
<dbReference type="SMR" id="B4SBU2"/>
<dbReference type="STRING" id="324925.Ppha_0284"/>
<dbReference type="KEGG" id="pph:Ppha_0284"/>
<dbReference type="eggNOG" id="COG0048">
    <property type="taxonomic scope" value="Bacteria"/>
</dbReference>
<dbReference type="HOGENOM" id="CLU_104295_1_2_10"/>
<dbReference type="OrthoDB" id="9802366at2"/>
<dbReference type="Proteomes" id="UP000002724">
    <property type="component" value="Chromosome"/>
</dbReference>
<dbReference type="GO" id="GO:0015935">
    <property type="term" value="C:small ribosomal subunit"/>
    <property type="evidence" value="ECO:0007669"/>
    <property type="project" value="InterPro"/>
</dbReference>
<dbReference type="GO" id="GO:0019843">
    <property type="term" value="F:rRNA binding"/>
    <property type="evidence" value="ECO:0007669"/>
    <property type="project" value="UniProtKB-UniRule"/>
</dbReference>
<dbReference type="GO" id="GO:0003735">
    <property type="term" value="F:structural constituent of ribosome"/>
    <property type="evidence" value="ECO:0007669"/>
    <property type="project" value="InterPro"/>
</dbReference>
<dbReference type="GO" id="GO:0000049">
    <property type="term" value="F:tRNA binding"/>
    <property type="evidence" value="ECO:0007669"/>
    <property type="project" value="UniProtKB-UniRule"/>
</dbReference>
<dbReference type="GO" id="GO:0006412">
    <property type="term" value="P:translation"/>
    <property type="evidence" value="ECO:0007669"/>
    <property type="project" value="UniProtKB-UniRule"/>
</dbReference>
<dbReference type="CDD" id="cd03368">
    <property type="entry name" value="Ribosomal_S12"/>
    <property type="match status" value="1"/>
</dbReference>
<dbReference type="FunFam" id="2.40.50.140:FF:000001">
    <property type="entry name" value="30S ribosomal protein S12"/>
    <property type="match status" value="1"/>
</dbReference>
<dbReference type="Gene3D" id="2.40.50.140">
    <property type="entry name" value="Nucleic acid-binding proteins"/>
    <property type="match status" value="1"/>
</dbReference>
<dbReference type="HAMAP" id="MF_00403_B">
    <property type="entry name" value="Ribosomal_uS12_B"/>
    <property type="match status" value="1"/>
</dbReference>
<dbReference type="InterPro" id="IPR012340">
    <property type="entry name" value="NA-bd_OB-fold"/>
</dbReference>
<dbReference type="InterPro" id="IPR006032">
    <property type="entry name" value="Ribosomal_uS12"/>
</dbReference>
<dbReference type="InterPro" id="IPR005679">
    <property type="entry name" value="Ribosomal_uS12_bac"/>
</dbReference>
<dbReference type="NCBIfam" id="TIGR00981">
    <property type="entry name" value="rpsL_bact"/>
    <property type="match status" value="1"/>
</dbReference>
<dbReference type="PANTHER" id="PTHR11652">
    <property type="entry name" value="30S RIBOSOMAL PROTEIN S12 FAMILY MEMBER"/>
    <property type="match status" value="1"/>
</dbReference>
<dbReference type="Pfam" id="PF00164">
    <property type="entry name" value="Ribosom_S12_S23"/>
    <property type="match status" value="1"/>
</dbReference>
<dbReference type="PIRSF" id="PIRSF002133">
    <property type="entry name" value="Ribosomal_S12/S23"/>
    <property type="match status" value="1"/>
</dbReference>
<dbReference type="PRINTS" id="PR01034">
    <property type="entry name" value="RIBOSOMALS12"/>
</dbReference>
<dbReference type="SUPFAM" id="SSF50249">
    <property type="entry name" value="Nucleic acid-binding proteins"/>
    <property type="match status" value="1"/>
</dbReference>
<dbReference type="PROSITE" id="PS00055">
    <property type="entry name" value="RIBOSOMAL_S12"/>
    <property type="match status" value="1"/>
</dbReference>
<gene>
    <name evidence="2" type="primary">rpsL</name>
    <name type="ordered locus">Ppha_0284</name>
</gene>
<comment type="function">
    <text evidence="2">With S4 and S5 plays an important role in translational accuracy.</text>
</comment>
<comment type="function">
    <text evidence="2">Interacts with and stabilizes bases of the 16S rRNA that are involved in tRNA selection in the A site and with the mRNA backbone. Located at the interface of the 30S and 50S subunits, it traverses the body of the 30S subunit contacting proteins on the other side and probably holding the rRNA structure together. The combined cluster of proteins S8, S12 and S17 appears to hold together the shoulder and platform of the 30S subunit.</text>
</comment>
<comment type="subunit">
    <text evidence="2">Part of the 30S ribosomal subunit. Contacts proteins S8 and S17. May interact with IF1 in the 30S initiation complex.</text>
</comment>
<comment type="similarity">
    <text evidence="2">Belongs to the universal ribosomal protein uS12 family.</text>
</comment>
<accession>B4SBU2</accession>
<reference key="1">
    <citation type="submission" date="2008-06" db="EMBL/GenBank/DDBJ databases">
        <title>Complete sequence of Pelodictyon phaeoclathratiforme BU-1.</title>
        <authorList>
            <consortium name="US DOE Joint Genome Institute"/>
            <person name="Lucas S."/>
            <person name="Copeland A."/>
            <person name="Lapidus A."/>
            <person name="Glavina del Rio T."/>
            <person name="Dalin E."/>
            <person name="Tice H."/>
            <person name="Bruce D."/>
            <person name="Goodwin L."/>
            <person name="Pitluck S."/>
            <person name="Schmutz J."/>
            <person name="Larimer F."/>
            <person name="Land M."/>
            <person name="Hauser L."/>
            <person name="Kyrpides N."/>
            <person name="Mikhailova N."/>
            <person name="Liu Z."/>
            <person name="Li T."/>
            <person name="Zhao F."/>
            <person name="Overmann J."/>
            <person name="Bryant D.A."/>
            <person name="Richardson P."/>
        </authorList>
    </citation>
    <scope>NUCLEOTIDE SEQUENCE [LARGE SCALE GENOMIC DNA]</scope>
    <source>
        <strain>DSM 5477 / BU-1</strain>
    </source>
</reference>
<proteinExistence type="inferred from homology"/>